<keyword id="KW-1185">Reference proteome</keyword>
<keyword id="KW-0687">Ribonucleoprotein</keyword>
<keyword id="KW-0689">Ribosomal protein</keyword>
<keyword id="KW-0694">RNA-binding</keyword>
<keyword id="KW-0699">rRNA-binding</keyword>
<sequence>MRVILQKDVINLGDAGDLKEVADGYARNFLFPKRLAVRANEGNTKAALHQKKLGELKREKRKKAMEDVGGNLNGKEYEILVKTGGGEKLFGAVTPIDVASILKKNGFELDKRKIEIAEPIRNLGSYKIKIRLAEGIQPTITLHVKKEEE</sequence>
<accession>Q8F5K3</accession>
<organism>
    <name type="scientific">Leptospira interrogans serogroup Icterohaemorrhagiae serovar Lai (strain 56601)</name>
    <dbReference type="NCBI Taxonomy" id="189518"/>
    <lineage>
        <taxon>Bacteria</taxon>
        <taxon>Pseudomonadati</taxon>
        <taxon>Spirochaetota</taxon>
        <taxon>Spirochaetia</taxon>
        <taxon>Leptospirales</taxon>
        <taxon>Leptospiraceae</taxon>
        <taxon>Leptospira</taxon>
    </lineage>
</organism>
<dbReference type="EMBL" id="AE010300">
    <property type="protein sequence ID" value="AAN48877.1"/>
    <property type="molecule type" value="Genomic_DNA"/>
</dbReference>
<dbReference type="RefSeq" id="NP_711859.1">
    <property type="nucleotide sequence ID" value="NC_004342.2"/>
</dbReference>
<dbReference type="RefSeq" id="WP_001263864.1">
    <property type="nucleotide sequence ID" value="NC_004342.2"/>
</dbReference>
<dbReference type="SMR" id="Q8F5K3"/>
<dbReference type="STRING" id="189518.LA_1678"/>
<dbReference type="PaxDb" id="189518-LA_1678"/>
<dbReference type="EnsemblBacteria" id="AAN48877">
    <property type="protein sequence ID" value="AAN48877"/>
    <property type="gene ID" value="LA_1678"/>
</dbReference>
<dbReference type="GeneID" id="61141995"/>
<dbReference type="KEGG" id="lil:LA_1678"/>
<dbReference type="PATRIC" id="fig|189518.3.peg.1672"/>
<dbReference type="HOGENOM" id="CLU_078938_3_0_12"/>
<dbReference type="InParanoid" id="Q8F5K3"/>
<dbReference type="OrthoDB" id="9788336at2"/>
<dbReference type="Proteomes" id="UP000001408">
    <property type="component" value="Chromosome I"/>
</dbReference>
<dbReference type="GO" id="GO:0022625">
    <property type="term" value="C:cytosolic large ribosomal subunit"/>
    <property type="evidence" value="ECO:0000318"/>
    <property type="project" value="GO_Central"/>
</dbReference>
<dbReference type="GO" id="GO:0019843">
    <property type="term" value="F:rRNA binding"/>
    <property type="evidence" value="ECO:0007669"/>
    <property type="project" value="UniProtKB-UniRule"/>
</dbReference>
<dbReference type="GO" id="GO:0003735">
    <property type="term" value="F:structural constituent of ribosome"/>
    <property type="evidence" value="ECO:0007669"/>
    <property type="project" value="InterPro"/>
</dbReference>
<dbReference type="GO" id="GO:0006412">
    <property type="term" value="P:translation"/>
    <property type="evidence" value="ECO:0007669"/>
    <property type="project" value="UniProtKB-UniRule"/>
</dbReference>
<dbReference type="FunFam" id="3.10.430.100:FF:000011">
    <property type="entry name" value="50S ribosomal protein L9"/>
    <property type="match status" value="1"/>
</dbReference>
<dbReference type="FunFam" id="3.40.5.10:FF:000008">
    <property type="entry name" value="50S ribosomal protein L9"/>
    <property type="match status" value="1"/>
</dbReference>
<dbReference type="Gene3D" id="3.10.430.100">
    <property type="entry name" value="Ribosomal protein L9, C-terminal domain"/>
    <property type="match status" value="1"/>
</dbReference>
<dbReference type="Gene3D" id="3.40.5.10">
    <property type="entry name" value="Ribosomal protein L9, N-terminal domain"/>
    <property type="match status" value="1"/>
</dbReference>
<dbReference type="HAMAP" id="MF_00503">
    <property type="entry name" value="Ribosomal_bL9"/>
    <property type="match status" value="1"/>
</dbReference>
<dbReference type="InterPro" id="IPR000244">
    <property type="entry name" value="Ribosomal_bL9"/>
</dbReference>
<dbReference type="InterPro" id="IPR009027">
    <property type="entry name" value="Ribosomal_bL9/RNase_H1_N"/>
</dbReference>
<dbReference type="InterPro" id="IPR020594">
    <property type="entry name" value="Ribosomal_bL9_bac/chp"/>
</dbReference>
<dbReference type="InterPro" id="IPR020069">
    <property type="entry name" value="Ribosomal_bL9_C"/>
</dbReference>
<dbReference type="InterPro" id="IPR036791">
    <property type="entry name" value="Ribosomal_bL9_C_sf"/>
</dbReference>
<dbReference type="InterPro" id="IPR020070">
    <property type="entry name" value="Ribosomal_bL9_N"/>
</dbReference>
<dbReference type="InterPro" id="IPR036935">
    <property type="entry name" value="Ribosomal_bL9_N_sf"/>
</dbReference>
<dbReference type="NCBIfam" id="TIGR00158">
    <property type="entry name" value="L9"/>
    <property type="match status" value="1"/>
</dbReference>
<dbReference type="PANTHER" id="PTHR21368">
    <property type="entry name" value="50S RIBOSOMAL PROTEIN L9"/>
    <property type="match status" value="1"/>
</dbReference>
<dbReference type="Pfam" id="PF03948">
    <property type="entry name" value="Ribosomal_L9_C"/>
    <property type="match status" value="1"/>
</dbReference>
<dbReference type="Pfam" id="PF01281">
    <property type="entry name" value="Ribosomal_L9_N"/>
    <property type="match status" value="1"/>
</dbReference>
<dbReference type="SUPFAM" id="SSF55658">
    <property type="entry name" value="L9 N-domain-like"/>
    <property type="match status" value="1"/>
</dbReference>
<dbReference type="SUPFAM" id="SSF55653">
    <property type="entry name" value="Ribosomal protein L9 C-domain"/>
    <property type="match status" value="1"/>
</dbReference>
<dbReference type="PROSITE" id="PS00651">
    <property type="entry name" value="RIBOSOMAL_L9"/>
    <property type="match status" value="1"/>
</dbReference>
<proteinExistence type="inferred from homology"/>
<name>RL9_LEPIN</name>
<gene>
    <name evidence="1" type="primary">rplI</name>
    <name type="ordered locus">LA_1678</name>
</gene>
<feature type="chain" id="PRO_0000176647" description="Large ribosomal subunit protein bL9">
    <location>
        <begin position="1"/>
        <end position="149"/>
    </location>
</feature>
<reference key="1">
    <citation type="journal article" date="2003" name="Nature">
        <title>Unique physiological and pathogenic features of Leptospira interrogans revealed by whole-genome sequencing.</title>
        <authorList>
            <person name="Ren S.-X."/>
            <person name="Fu G."/>
            <person name="Jiang X.-G."/>
            <person name="Zeng R."/>
            <person name="Miao Y.-G."/>
            <person name="Xu H."/>
            <person name="Zhang Y.-X."/>
            <person name="Xiong H."/>
            <person name="Lu G."/>
            <person name="Lu L.-F."/>
            <person name="Jiang H.-Q."/>
            <person name="Jia J."/>
            <person name="Tu Y.-F."/>
            <person name="Jiang J.-X."/>
            <person name="Gu W.-Y."/>
            <person name="Zhang Y.-Q."/>
            <person name="Cai Z."/>
            <person name="Sheng H.-H."/>
            <person name="Yin H.-F."/>
            <person name="Zhang Y."/>
            <person name="Zhu G.-F."/>
            <person name="Wan M."/>
            <person name="Huang H.-L."/>
            <person name="Qian Z."/>
            <person name="Wang S.-Y."/>
            <person name="Ma W."/>
            <person name="Yao Z.-J."/>
            <person name="Shen Y."/>
            <person name="Qiang B.-Q."/>
            <person name="Xia Q.-C."/>
            <person name="Guo X.-K."/>
            <person name="Danchin A."/>
            <person name="Saint Girons I."/>
            <person name="Somerville R.L."/>
            <person name="Wen Y.-M."/>
            <person name="Shi M.-H."/>
            <person name="Chen Z."/>
            <person name="Xu J.-G."/>
            <person name="Zhao G.-P."/>
        </authorList>
    </citation>
    <scope>NUCLEOTIDE SEQUENCE [LARGE SCALE GENOMIC DNA]</scope>
    <source>
        <strain>56601</strain>
    </source>
</reference>
<evidence type="ECO:0000255" key="1">
    <source>
        <dbReference type="HAMAP-Rule" id="MF_00503"/>
    </source>
</evidence>
<evidence type="ECO:0000305" key="2"/>
<protein>
    <recommendedName>
        <fullName evidence="1">Large ribosomal subunit protein bL9</fullName>
    </recommendedName>
    <alternativeName>
        <fullName evidence="2">50S ribosomal protein L9</fullName>
    </alternativeName>
</protein>
<comment type="function">
    <text evidence="1">Binds to the 23S rRNA.</text>
</comment>
<comment type="similarity">
    <text evidence="1">Belongs to the bacterial ribosomal protein bL9 family.</text>
</comment>